<dbReference type="EMBL" id="AB006624">
    <property type="protein sequence ID" value="BAA22955.2"/>
    <property type="status" value="ALT_INIT"/>
    <property type="molecule type" value="mRNA"/>
</dbReference>
<dbReference type="EMBL" id="CR749406">
    <property type="protein sequence ID" value="CAH18250.1"/>
    <property type="molecule type" value="mRNA"/>
</dbReference>
<dbReference type="EMBL" id="AK294566">
    <property type="protein sequence ID" value="BAG57761.1"/>
    <property type="molecule type" value="mRNA"/>
</dbReference>
<dbReference type="EMBL" id="BC071597">
    <property type="protein sequence ID" value="AAH71597.1"/>
    <property type="status" value="ALT_INIT"/>
    <property type="molecule type" value="mRNA"/>
</dbReference>
<dbReference type="EMBL" id="BC117436">
    <property type="protein sequence ID" value="AAI17437.1"/>
    <property type="molecule type" value="mRNA"/>
</dbReference>
<dbReference type="EMBL" id="BC126300">
    <property type="protein sequence ID" value="AAI26301.1"/>
    <property type="molecule type" value="mRNA"/>
</dbReference>
<dbReference type="CCDS" id="CCDS31841.1">
    <molecule id="O14524-2"/>
</dbReference>
<dbReference type="CCDS" id="CCDS44927.1">
    <molecule id="O14524-1"/>
</dbReference>
<dbReference type="RefSeq" id="NP_001124435.1">
    <molecule id="O14524-1"/>
    <property type="nucleotide sequence ID" value="NM_001130963.2"/>
</dbReference>
<dbReference type="RefSeq" id="NP_056072.2">
    <molecule id="O14524-2"/>
    <property type="nucleotide sequence ID" value="NM_015257.3"/>
</dbReference>
<dbReference type="BioGRID" id="116898">
    <property type="interactions" value="98"/>
</dbReference>
<dbReference type="FunCoup" id="O14524">
    <property type="interactions" value="1741"/>
</dbReference>
<dbReference type="IntAct" id="O14524">
    <property type="interactions" value="68"/>
</dbReference>
<dbReference type="MINT" id="O14524"/>
<dbReference type="STRING" id="9606.ENSP00000300128"/>
<dbReference type="TCDB" id="9.B.368.1.1">
    <property type="family name" value="the tmem194a (tmem194a) family"/>
</dbReference>
<dbReference type="GlyConnect" id="1577">
    <property type="glycosylation" value="1 N-Linked glycan (1 site)"/>
</dbReference>
<dbReference type="GlyCosmos" id="O14524">
    <property type="glycosylation" value="1 site, 1 glycan"/>
</dbReference>
<dbReference type="GlyGen" id="O14524">
    <property type="glycosylation" value="2 sites, 6 N-linked glycans (2 sites)"/>
</dbReference>
<dbReference type="iPTMnet" id="O14524"/>
<dbReference type="PhosphoSitePlus" id="O14524"/>
<dbReference type="SwissPalm" id="O14524"/>
<dbReference type="BioMuta" id="NEMP1"/>
<dbReference type="jPOST" id="O14524"/>
<dbReference type="MassIVE" id="O14524"/>
<dbReference type="PaxDb" id="9606-ENSP00000300128"/>
<dbReference type="PeptideAtlas" id="O14524"/>
<dbReference type="ProteomicsDB" id="48069">
    <molecule id="O14524-1"/>
</dbReference>
<dbReference type="ProteomicsDB" id="48070">
    <molecule id="O14524-2"/>
</dbReference>
<dbReference type="Pumba" id="O14524"/>
<dbReference type="Antibodypedia" id="16059">
    <property type="antibodies" value="29 antibodies from 15 providers"/>
</dbReference>
<dbReference type="DNASU" id="23306"/>
<dbReference type="Ensembl" id="ENST00000300128.9">
    <molecule id="O14524-1"/>
    <property type="protein sequence ID" value="ENSP00000300128.4"/>
    <property type="gene ID" value="ENSG00000166881.10"/>
</dbReference>
<dbReference type="Ensembl" id="ENST00000379391.7">
    <molecule id="O14524-2"/>
    <property type="protein sequence ID" value="ENSP00000368701.3"/>
    <property type="gene ID" value="ENSG00000166881.10"/>
</dbReference>
<dbReference type="GeneID" id="23306"/>
<dbReference type="KEGG" id="hsa:23306"/>
<dbReference type="MANE-Select" id="ENST00000300128.9">
    <property type="protein sequence ID" value="ENSP00000300128.4"/>
    <property type="RefSeq nucleotide sequence ID" value="NM_001130963.2"/>
    <property type="RefSeq protein sequence ID" value="NP_001124435.1"/>
</dbReference>
<dbReference type="UCSC" id="uc001smx.4">
    <molecule id="O14524-1"/>
    <property type="organism name" value="human"/>
</dbReference>
<dbReference type="AGR" id="HGNC:29001"/>
<dbReference type="CTD" id="23306"/>
<dbReference type="DisGeNET" id="23306"/>
<dbReference type="GeneCards" id="NEMP1"/>
<dbReference type="HGNC" id="HGNC:29001">
    <property type="gene designation" value="NEMP1"/>
</dbReference>
<dbReference type="HPA" id="ENSG00000166881">
    <property type="expression patterns" value="Low tissue specificity"/>
</dbReference>
<dbReference type="MIM" id="616496">
    <property type="type" value="gene"/>
</dbReference>
<dbReference type="neXtProt" id="NX_O14524"/>
<dbReference type="OpenTargets" id="ENSG00000166881"/>
<dbReference type="PharmGKB" id="PA162406290"/>
<dbReference type="VEuPathDB" id="HostDB:ENSG00000166881"/>
<dbReference type="eggNOG" id="KOG3817">
    <property type="taxonomic scope" value="Eukaryota"/>
</dbReference>
<dbReference type="GeneTree" id="ENSGT00390000002174"/>
<dbReference type="HOGENOM" id="CLU_025225_0_0_1"/>
<dbReference type="InParanoid" id="O14524"/>
<dbReference type="OMA" id="MAGCMKM"/>
<dbReference type="OrthoDB" id="509138at2759"/>
<dbReference type="PAN-GO" id="O14524">
    <property type="GO annotations" value="1 GO annotation based on evolutionary models"/>
</dbReference>
<dbReference type="PhylomeDB" id="O14524"/>
<dbReference type="TreeFam" id="TF314831"/>
<dbReference type="PathwayCommons" id="O14524"/>
<dbReference type="SignaLink" id="O14524"/>
<dbReference type="BioGRID-ORCS" id="23306">
    <property type="hits" value="18 hits in 1157 CRISPR screens"/>
</dbReference>
<dbReference type="ChiTaRS" id="NEMP1">
    <property type="organism name" value="human"/>
</dbReference>
<dbReference type="GenomeRNAi" id="23306"/>
<dbReference type="Pharos" id="O14524">
    <property type="development level" value="Tdark"/>
</dbReference>
<dbReference type="PRO" id="PR:O14524"/>
<dbReference type="Proteomes" id="UP000005640">
    <property type="component" value="Chromosome 12"/>
</dbReference>
<dbReference type="RNAct" id="O14524">
    <property type="molecule type" value="protein"/>
</dbReference>
<dbReference type="Bgee" id="ENSG00000166881">
    <property type="expression patterns" value="Expressed in oocyte and 146 other cell types or tissues"/>
</dbReference>
<dbReference type="ExpressionAtlas" id="O14524">
    <property type="expression patterns" value="baseline and differential"/>
</dbReference>
<dbReference type="GO" id="GO:0005635">
    <property type="term" value="C:nuclear envelope"/>
    <property type="evidence" value="ECO:0000250"/>
    <property type="project" value="UniProtKB"/>
</dbReference>
<dbReference type="GO" id="GO:0005637">
    <property type="term" value="C:nuclear inner membrane"/>
    <property type="evidence" value="ECO:0007669"/>
    <property type="project" value="UniProtKB-SubCell"/>
</dbReference>
<dbReference type="GO" id="GO:0043131">
    <property type="term" value="P:erythrocyte enucleation"/>
    <property type="evidence" value="ECO:0000250"/>
    <property type="project" value="UniProtKB"/>
</dbReference>
<dbReference type="GO" id="GO:0043249">
    <property type="term" value="P:erythrocyte maturation"/>
    <property type="evidence" value="ECO:0000250"/>
    <property type="project" value="UniProtKB"/>
</dbReference>
<dbReference type="GO" id="GO:0071763">
    <property type="term" value="P:nuclear membrane organization"/>
    <property type="evidence" value="ECO:0000315"/>
    <property type="project" value="FlyBase"/>
</dbReference>
<dbReference type="InterPro" id="IPR019358">
    <property type="entry name" value="NEMP_fam"/>
</dbReference>
<dbReference type="PANTHER" id="PTHR13598">
    <property type="entry name" value="AT07567P-RELATED"/>
    <property type="match status" value="1"/>
</dbReference>
<dbReference type="PANTHER" id="PTHR13598:SF2">
    <property type="entry name" value="NUCLEAR ENVELOPE INTEGRAL MEMBRANE PROTEIN 1"/>
    <property type="match status" value="1"/>
</dbReference>
<dbReference type="Pfam" id="PF10225">
    <property type="entry name" value="NEMP"/>
    <property type="match status" value="1"/>
</dbReference>
<reference key="1">
    <citation type="journal article" date="1997" name="DNA Res.">
        <title>Construction and characterization of human brain cDNA libraries suitable for analysis of cDNA clones encoding relatively large proteins.</title>
        <authorList>
            <person name="Ohara O."/>
            <person name="Nagase T."/>
            <person name="Ishikawa K."/>
            <person name="Nakajima D."/>
            <person name="Ohira M."/>
            <person name="Seki N."/>
            <person name="Nomura N."/>
        </authorList>
    </citation>
    <scope>NUCLEOTIDE SEQUENCE [LARGE SCALE MRNA] (ISOFORM 1)</scope>
    <source>
        <tissue>Brain</tissue>
    </source>
</reference>
<reference key="2">
    <citation type="journal article" date="2002" name="DNA Res.">
        <title>Construction of expression-ready cDNA clones for KIAA genes: manual curation of 330 KIAA cDNA clones.</title>
        <authorList>
            <person name="Nakajima D."/>
            <person name="Okazaki N."/>
            <person name="Yamakawa H."/>
            <person name="Kikuno R."/>
            <person name="Ohara O."/>
            <person name="Nagase T."/>
        </authorList>
    </citation>
    <scope>SEQUENCE REVISION</scope>
</reference>
<reference key="3">
    <citation type="journal article" date="2004" name="Nat. Genet.">
        <title>Complete sequencing and characterization of 21,243 full-length human cDNAs.</title>
        <authorList>
            <person name="Ota T."/>
            <person name="Suzuki Y."/>
            <person name="Nishikawa T."/>
            <person name="Otsuki T."/>
            <person name="Sugiyama T."/>
            <person name="Irie R."/>
            <person name="Wakamatsu A."/>
            <person name="Hayashi K."/>
            <person name="Sato H."/>
            <person name="Nagai K."/>
            <person name="Kimura K."/>
            <person name="Makita H."/>
            <person name="Sekine M."/>
            <person name="Obayashi M."/>
            <person name="Nishi T."/>
            <person name="Shibahara T."/>
            <person name="Tanaka T."/>
            <person name="Ishii S."/>
            <person name="Yamamoto J."/>
            <person name="Saito K."/>
            <person name="Kawai Y."/>
            <person name="Isono Y."/>
            <person name="Nakamura Y."/>
            <person name="Nagahari K."/>
            <person name="Murakami K."/>
            <person name="Yasuda T."/>
            <person name="Iwayanagi T."/>
            <person name="Wagatsuma M."/>
            <person name="Shiratori A."/>
            <person name="Sudo H."/>
            <person name="Hosoiri T."/>
            <person name="Kaku Y."/>
            <person name="Kodaira H."/>
            <person name="Kondo H."/>
            <person name="Sugawara M."/>
            <person name="Takahashi M."/>
            <person name="Kanda K."/>
            <person name="Yokoi T."/>
            <person name="Furuya T."/>
            <person name="Kikkawa E."/>
            <person name="Omura Y."/>
            <person name="Abe K."/>
            <person name="Kamihara K."/>
            <person name="Katsuta N."/>
            <person name="Sato K."/>
            <person name="Tanikawa M."/>
            <person name="Yamazaki M."/>
            <person name="Ninomiya K."/>
            <person name="Ishibashi T."/>
            <person name="Yamashita H."/>
            <person name="Murakawa K."/>
            <person name="Fujimori K."/>
            <person name="Tanai H."/>
            <person name="Kimata M."/>
            <person name="Watanabe M."/>
            <person name="Hiraoka S."/>
            <person name="Chiba Y."/>
            <person name="Ishida S."/>
            <person name="Ono Y."/>
            <person name="Takiguchi S."/>
            <person name="Watanabe S."/>
            <person name="Yosida M."/>
            <person name="Hotuta T."/>
            <person name="Kusano J."/>
            <person name="Kanehori K."/>
            <person name="Takahashi-Fujii A."/>
            <person name="Hara H."/>
            <person name="Tanase T.-O."/>
            <person name="Nomura Y."/>
            <person name="Togiya S."/>
            <person name="Komai F."/>
            <person name="Hara R."/>
            <person name="Takeuchi K."/>
            <person name="Arita M."/>
            <person name="Imose N."/>
            <person name="Musashino K."/>
            <person name="Yuuki H."/>
            <person name="Oshima A."/>
            <person name="Sasaki N."/>
            <person name="Aotsuka S."/>
            <person name="Yoshikawa Y."/>
            <person name="Matsunawa H."/>
            <person name="Ichihara T."/>
            <person name="Shiohata N."/>
            <person name="Sano S."/>
            <person name="Moriya S."/>
            <person name="Momiyama H."/>
            <person name="Satoh N."/>
            <person name="Takami S."/>
            <person name="Terashima Y."/>
            <person name="Suzuki O."/>
            <person name="Nakagawa S."/>
            <person name="Senoh A."/>
            <person name="Mizoguchi H."/>
            <person name="Goto Y."/>
            <person name="Shimizu F."/>
            <person name="Wakebe H."/>
            <person name="Hishigaki H."/>
            <person name="Watanabe T."/>
            <person name="Sugiyama A."/>
            <person name="Takemoto M."/>
            <person name="Kawakami B."/>
            <person name="Yamazaki M."/>
            <person name="Watanabe K."/>
            <person name="Kumagai A."/>
            <person name="Itakura S."/>
            <person name="Fukuzumi Y."/>
            <person name="Fujimori Y."/>
            <person name="Komiyama M."/>
            <person name="Tashiro H."/>
            <person name="Tanigami A."/>
            <person name="Fujiwara T."/>
            <person name="Ono T."/>
            <person name="Yamada K."/>
            <person name="Fujii Y."/>
            <person name="Ozaki K."/>
            <person name="Hirao M."/>
            <person name="Ohmori Y."/>
            <person name="Kawabata A."/>
            <person name="Hikiji T."/>
            <person name="Kobatake N."/>
            <person name="Inagaki H."/>
            <person name="Ikema Y."/>
            <person name="Okamoto S."/>
            <person name="Okitani R."/>
            <person name="Kawakami T."/>
            <person name="Noguchi S."/>
            <person name="Itoh T."/>
            <person name="Shigeta K."/>
            <person name="Senba T."/>
            <person name="Matsumura K."/>
            <person name="Nakajima Y."/>
            <person name="Mizuno T."/>
            <person name="Morinaga M."/>
            <person name="Sasaki M."/>
            <person name="Togashi T."/>
            <person name="Oyama M."/>
            <person name="Hata H."/>
            <person name="Watanabe M."/>
            <person name="Komatsu T."/>
            <person name="Mizushima-Sugano J."/>
            <person name="Satoh T."/>
            <person name="Shirai Y."/>
            <person name="Takahashi Y."/>
            <person name="Nakagawa K."/>
            <person name="Okumura K."/>
            <person name="Nagase T."/>
            <person name="Nomura N."/>
            <person name="Kikuchi H."/>
            <person name="Masuho Y."/>
            <person name="Yamashita R."/>
            <person name="Nakai K."/>
            <person name="Yada T."/>
            <person name="Nakamura Y."/>
            <person name="Ohara O."/>
            <person name="Isogai T."/>
            <person name="Sugano S."/>
        </authorList>
    </citation>
    <scope>NUCLEOTIDE SEQUENCE [LARGE SCALE MRNA] (ISOFORM 2)</scope>
    <source>
        <tissue>Amygdala</tissue>
    </source>
</reference>
<reference key="4">
    <citation type="journal article" date="2007" name="BMC Genomics">
        <title>The full-ORF clone resource of the German cDNA consortium.</title>
        <authorList>
            <person name="Bechtel S."/>
            <person name="Rosenfelder H."/>
            <person name="Duda A."/>
            <person name="Schmidt C.P."/>
            <person name="Ernst U."/>
            <person name="Wellenreuther R."/>
            <person name="Mehrle A."/>
            <person name="Schuster C."/>
            <person name="Bahr A."/>
            <person name="Bloecker H."/>
            <person name="Heubner D."/>
            <person name="Hoerlein A."/>
            <person name="Michel G."/>
            <person name="Wedler H."/>
            <person name="Koehrer K."/>
            <person name="Ottenwaelder B."/>
            <person name="Poustka A."/>
            <person name="Wiemann S."/>
            <person name="Schupp I."/>
        </authorList>
    </citation>
    <scope>NUCLEOTIDE SEQUENCE [LARGE SCALE MRNA] (ISOFORM 2)</scope>
    <source>
        <tissue>Endometrial tumor</tissue>
    </source>
</reference>
<reference key="5">
    <citation type="journal article" date="2004" name="Genome Res.">
        <title>The status, quality, and expansion of the NIH full-length cDNA project: the Mammalian Gene Collection (MGC).</title>
        <authorList>
            <consortium name="The MGC Project Team"/>
        </authorList>
    </citation>
    <scope>NUCLEOTIDE SEQUENCE [LARGE SCALE MRNA] (ISOFORMS 1 AND 2)</scope>
    <source>
        <tissue>Placenta</tissue>
    </source>
</reference>
<reference key="6">
    <citation type="journal article" date="2008" name="Mol. Cell">
        <title>Kinase-selective enrichment enables quantitative phosphoproteomics of the kinome across the cell cycle.</title>
        <authorList>
            <person name="Daub H."/>
            <person name="Olsen J.V."/>
            <person name="Bairlein M."/>
            <person name="Gnad F."/>
            <person name="Oppermann F.S."/>
            <person name="Korner R."/>
            <person name="Greff Z."/>
            <person name="Keri G."/>
            <person name="Stemmann O."/>
            <person name="Mann M."/>
        </authorList>
    </citation>
    <scope>PHOSPHORYLATION [LARGE SCALE ANALYSIS] AT SER-368</scope>
    <scope>IDENTIFICATION BY MASS SPECTROMETRY [LARGE SCALE ANALYSIS]</scope>
    <source>
        <tissue>Cervix carcinoma</tissue>
    </source>
</reference>
<reference key="7">
    <citation type="journal article" date="2008" name="Proc. Natl. Acad. Sci. U.S.A.">
        <title>A quantitative atlas of mitotic phosphorylation.</title>
        <authorList>
            <person name="Dephoure N."/>
            <person name="Zhou C."/>
            <person name="Villen J."/>
            <person name="Beausoleil S.A."/>
            <person name="Bakalarski C.E."/>
            <person name="Elledge S.J."/>
            <person name="Gygi S.P."/>
        </authorList>
    </citation>
    <scope>PHOSPHORYLATION [LARGE SCALE ANALYSIS] AT SER-368</scope>
    <scope>IDENTIFICATION BY MASS SPECTROMETRY [LARGE SCALE ANALYSIS]</scope>
    <source>
        <tissue>Cervix carcinoma</tissue>
    </source>
</reference>
<reference key="8">
    <citation type="journal article" date="2014" name="J. Proteomics">
        <title>An enzyme assisted RP-RPLC approach for in-depth analysis of human liver phosphoproteome.</title>
        <authorList>
            <person name="Bian Y."/>
            <person name="Song C."/>
            <person name="Cheng K."/>
            <person name="Dong M."/>
            <person name="Wang F."/>
            <person name="Huang J."/>
            <person name="Sun D."/>
            <person name="Wang L."/>
            <person name="Ye M."/>
            <person name="Zou H."/>
        </authorList>
    </citation>
    <scope>PHOSPHORYLATION [LARGE SCALE ANALYSIS] AT SER-424 AND SER-425</scope>
    <scope>IDENTIFICATION BY MASS SPECTROMETRY [LARGE SCALE ANALYSIS]</scope>
    <source>
        <tissue>Liver</tissue>
    </source>
</reference>
<reference key="9">
    <citation type="journal article" date="2020" name="Sci. Adv.">
        <title>The NEMP family supports metazoan fertility and nuclear envelope stiffness.</title>
        <authorList>
            <person name="Tsatskis Y."/>
            <person name="Rosenfeld R."/>
            <person name="Pearson J.D."/>
            <person name="Boswell C."/>
            <person name="Qu Y."/>
            <person name="Kim K."/>
            <person name="Fabian L."/>
            <person name="Mohammad A."/>
            <person name="Wang X."/>
            <person name="Robson M.I."/>
            <person name="Krchma K."/>
            <person name="Wu J."/>
            <person name="Goncalves J."/>
            <person name="Hodzic D."/>
            <person name="Wu S."/>
            <person name="Potter D."/>
            <person name="Pelletier L."/>
            <person name="Dunham W.H."/>
            <person name="Gingras A.C."/>
            <person name="Sun Y."/>
            <person name="Meng J."/>
            <person name="Godt D."/>
            <person name="Schedl T."/>
            <person name="Ciruna B."/>
            <person name="Choi K."/>
            <person name="Perry J.R.B."/>
            <person name="Bremner R."/>
            <person name="Schirmer E.C."/>
            <person name="Brill J.A."/>
            <person name="Jurisicova A."/>
            <person name="McNeill H."/>
        </authorList>
    </citation>
    <scope>FUNCTION</scope>
    <scope>INTERACTION WITH EMD</scope>
</reference>
<accession>O14524</accession>
<accession>Q17R72</accession>
<accession>Q68DH0</accession>
<accession>Q6IQ25</accession>
<gene>
    <name type="primary">NEMP1</name>
    <name type="synonym">KIAA0286</name>
    <name type="synonym">TMEM194</name>
    <name type="synonym">TMEM194A</name>
</gene>
<evidence type="ECO:0000250" key="1">
    <source>
        <dbReference type="UniProtKB" id="B9X187"/>
    </source>
</evidence>
<evidence type="ECO:0000250" key="2">
    <source>
        <dbReference type="UniProtKB" id="Q6ZQE4"/>
    </source>
</evidence>
<evidence type="ECO:0000255" key="3"/>
<evidence type="ECO:0000269" key="4">
    <source>
    </source>
</evidence>
<evidence type="ECO:0000303" key="5">
    <source>
    </source>
</evidence>
<evidence type="ECO:0000303" key="6">
    <source>
    </source>
</evidence>
<evidence type="ECO:0000303" key="7">
    <source>
    </source>
</evidence>
<evidence type="ECO:0000305" key="8"/>
<evidence type="ECO:0007744" key="9">
    <source>
    </source>
</evidence>
<evidence type="ECO:0007744" key="10">
    <source>
    </source>
</evidence>
<evidence type="ECO:0007744" key="11">
    <source>
    </source>
</evidence>
<comment type="function">
    <text evidence="2 4">Together with EMD, contributes to nuclear envelope stiffness in germ cells (PubMed:32923640). Required for female fertility (By similarity). Essential for normal erythropoiesis (By similarity). Required for efficient nuclear envelope opening and enucleation during the late stages of erythroblast maturation (By similarity).</text>
</comment>
<comment type="subunit">
    <text evidence="1 2 4">Homooligomer (By similarity). Interacts with RAN-GTP (By similarity). Interacts with EMD (PubMed:32923640).</text>
</comment>
<comment type="interaction">
    <interactant intactId="EBI-10969203">
        <id>O14524-2</id>
    </interactant>
    <interactant intactId="EBI-10827839">
        <id>Q15848</id>
        <label>ADIPOQ</label>
    </interactant>
    <organismsDiffer>false</organismsDiffer>
    <experiments>3</experiments>
</comment>
<comment type="interaction">
    <interactant intactId="EBI-10969203">
        <id>O14524-2</id>
    </interactant>
    <interactant intactId="EBI-12820279">
        <id>Q96PS8</id>
        <label>AQP10</label>
    </interactant>
    <organismsDiffer>false</organismsDiffer>
    <experiments>3</experiments>
</comment>
<comment type="interaction">
    <interactant intactId="EBI-10969203">
        <id>O14524-2</id>
    </interactant>
    <interactant intactId="EBI-1172335">
        <id>P07306</id>
        <label>ASGR1</label>
    </interactant>
    <organismsDiffer>false</organismsDiffer>
    <experiments>3</experiments>
</comment>
<comment type="interaction">
    <interactant intactId="EBI-10969203">
        <id>O14524-2</id>
    </interactant>
    <interactant intactId="EBI-12244618">
        <id>Q6PL45-2</id>
        <label>BRICD5</label>
    </interactant>
    <organismsDiffer>false</organismsDiffer>
    <experiments>3</experiments>
</comment>
<comment type="interaction">
    <interactant intactId="EBI-10969203">
        <id>O14524-2</id>
    </interactant>
    <interactant intactId="EBI-8558308">
        <id>P01031</id>
        <label>C5</label>
    </interactant>
    <organismsDiffer>false</organismsDiffer>
    <experiments>3</experiments>
</comment>
<comment type="interaction">
    <interactant intactId="EBI-10969203">
        <id>O14524-2</id>
    </interactant>
    <interactant intactId="EBI-712921">
        <id>P60033</id>
        <label>CD81</label>
    </interactant>
    <organismsDiffer>false</organismsDiffer>
    <experiments>3</experiments>
</comment>
<comment type="interaction">
    <interactant intactId="EBI-10969203">
        <id>O14524-2</id>
    </interactant>
    <interactant intactId="EBI-11989440">
        <id>Q9BXN2-6</id>
        <label>CLEC7A</label>
    </interactant>
    <organismsDiffer>false</organismsDiffer>
    <experiments>3</experiments>
</comment>
<comment type="interaction">
    <interactant intactId="EBI-10969203">
        <id>O14524-2</id>
    </interactant>
    <interactant intactId="EBI-12813623">
        <id>A0PK11</id>
        <label>CLRN2</label>
    </interactant>
    <organismsDiffer>false</organismsDiffer>
    <experiments>3</experiments>
</comment>
<comment type="interaction">
    <interactant intactId="EBI-10969203">
        <id>O14524-2</id>
    </interactant>
    <interactant intactId="EBI-12208021">
        <id>Q8TBE1</id>
        <label>CNIH3</label>
    </interactant>
    <organismsDiffer>false</organismsDiffer>
    <experiments>3</experiments>
</comment>
<comment type="interaction">
    <interactant intactId="EBI-10969203">
        <id>O14524-2</id>
    </interactant>
    <interactant intactId="EBI-12211159">
        <id>P29400-2</id>
        <label>COL4A5</label>
    </interactant>
    <organismsDiffer>false</organismsDiffer>
    <experiments>3</experiments>
</comment>
<comment type="interaction">
    <interactant intactId="EBI-10969203">
        <id>O14524-2</id>
    </interactant>
    <interactant intactId="EBI-3911467">
        <id>Q07325</id>
        <label>CXCL9</label>
    </interactant>
    <organismsDiffer>false</organismsDiffer>
    <experiments>3</experiments>
</comment>
<comment type="interaction">
    <interactant intactId="EBI-10969203">
        <id>O14524-2</id>
    </interactant>
    <interactant intactId="EBI-12142299">
        <id>Q96IV6</id>
        <label>FAXDC2</label>
    </interactant>
    <organismsDiffer>false</organismsDiffer>
    <experiments>3</experiments>
</comment>
<comment type="interaction">
    <interactant intactId="EBI-10969203">
        <id>O14524-2</id>
    </interactant>
    <interactant intactId="EBI-11343451">
        <id>Q9NPR9</id>
        <label>GPR108</label>
    </interactant>
    <organismsDiffer>false</organismsDiffer>
    <experiments>3</experiments>
</comment>
<comment type="interaction">
    <interactant intactId="EBI-10969203">
        <id>O14524-2</id>
    </interactant>
    <interactant intactId="EBI-12244272">
        <id>Q02747</id>
        <label>GUCA2A</label>
    </interactant>
    <organismsDiffer>false</organismsDiffer>
    <experiments>3</experiments>
</comment>
<comment type="interaction">
    <interactant intactId="EBI-10969203">
        <id>O14524-2</id>
    </interactant>
    <interactant intactId="EBI-8503746">
        <id>Q9Y5U4</id>
        <label>INSIG2</label>
    </interactant>
    <organismsDiffer>false</organismsDiffer>
    <experiments>3</experiments>
</comment>
<comment type="interaction">
    <interactant intactId="EBI-10969203">
        <id>O14524-2</id>
    </interactant>
    <interactant intactId="EBI-8652812">
        <id>P54315</id>
        <label>PNLIPRP1</label>
    </interactant>
    <organismsDiffer>false</organismsDiffer>
    <experiments>3</experiments>
</comment>
<comment type="interaction">
    <interactant intactId="EBI-10969203">
        <id>O14524-2</id>
    </interactant>
    <interactant intactId="EBI-10244780">
        <id>Q5QGT7</id>
        <label>RTP2</label>
    </interactant>
    <organismsDiffer>false</organismsDiffer>
    <experiments>3</experiments>
</comment>
<comment type="interaction">
    <interactant intactId="EBI-10969203">
        <id>O14524-2</id>
    </interactant>
    <interactant intactId="EBI-12056025">
        <id>Q14162</id>
        <label>SCARF1</label>
    </interactant>
    <organismsDiffer>false</organismsDiffer>
    <experiments>3</experiments>
</comment>
<comment type="interaction">
    <interactant intactId="EBI-10969203">
        <id>O14524-2</id>
    </interactant>
    <interactant intactId="EBI-749270">
        <id>Q8N6R1</id>
        <label>SERP2</label>
    </interactant>
    <organismsDiffer>false</organismsDiffer>
    <experiments>3</experiments>
</comment>
<comment type="interaction">
    <interactant intactId="EBI-10969203">
        <id>O14524-2</id>
    </interactant>
    <interactant intactId="EBI-2691717">
        <id>Q86Y82</id>
        <label>STX12</label>
    </interactant>
    <organismsDiffer>false</organismsDiffer>
    <experiments>3</experiments>
</comment>
<comment type="interaction">
    <interactant intactId="EBI-10969203">
        <id>O14524-2</id>
    </interactant>
    <interactant intactId="EBI-2800360">
        <id>Q9Y6G1</id>
        <label>TMEM14A</label>
    </interactant>
    <organismsDiffer>false</organismsDiffer>
    <experiments>3</experiments>
</comment>
<comment type="interaction">
    <interactant intactId="EBI-10969203">
        <id>O14524-2</id>
    </interactant>
    <interactant intactId="EBI-12195227">
        <id>Q8NBD8</id>
        <label>TMEM229B</label>
    </interactant>
    <organismsDiffer>false</organismsDiffer>
    <experiments>3</experiments>
</comment>
<comment type="interaction">
    <interactant intactId="EBI-10969203">
        <id>O14524-2</id>
    </interactant>
    <interactant intactId="EBI-12038591">
        <id>Q69YG0</id>
        <label>TMEM42</label>
    </interactant>
    <organismsDiffer>false</organismsDiffer>
    <experiments>3</experiments>
</comment>
<comment type="interaction">
    <interactant intactId="EBI-10969203">
        <id>O14524-2</id>
    </interactant>
    <interactant intactId="EBI-2548832">
        <id>Q8N661</id>
        <label>TMEM86B</label>
    </interactant>
    <organismsDiffer>false</organismsDiffer>
    <experiments>3</experiments>
</comment>
<comment type="interaction">
    <interactant intactId="EBI-10969203">
        <id>O14524-2</id>
    </interactant>
    <interactant intactId="EBI-12111910">
        <id>Q5BJF2</id>
        <label>TMEM97</label>
    </interactant>
    <organismsDiffer>false</organismsDiffer>
    <experiments>3</experiments>
</comment>
<comment type="interaction">
    <interactant intactId="EBI-10969203">
        <id>O14524-2</id>
    </interactant>
    <interactant intactId="EBI-2820477">
        <id>Q71RG4</id>
        <label>TMUB2</label>
    </interactant>
    <organismsDiffer>false</organismsDiffer>
    <experiments>3</experiments>
</comment>
<comment type="interaction">
    <interactant intactId="EBI-10969203">
        <id>O14524-2</id>
    </interactant>
    <interactant intactId="EBI-12045841">
        <id>Q86UF1</id>
        <label>TSPAN33</label>
    </interactant>
    <organismsDiffer>false</organismsDiffer>
    <experiments>3</experiments>
</comment>
<comment type="interaction">
    <interactant intactId="EBI-10969203">
        <id>O14524-2</id>
    </interactant>
    <interactant intactId="EBI-10243654">
        <id>Q5BVD1</id>
        <label>TTMP</label>
    </interactant>
    <organismsDiffer>false</organismsDiffer>
    <experiments>3</experiments>
</comment>
<comment type="interaction">
    <interactant intactId="EBI-10969203">
        <id>O14524-2</id>
    </interactant>
    <interactant intactId="EBI-12237619">
        <id>O75841</id>
        <label>UPK1B</label>
    </interactant>
    <organismsDiffer>false</organismsDiffer>
    <experiments>3</experiments>
</comment>
<comment type="interaction">
    <interactant intactId="EBI-10969203">
        <id>O14524-2</id>
    </interactant>
    <interactant intactId="EBI-722343">
        <id>Q15836</id>
        <label>VAMP3</label>
    </interactant>
    <organismsDiffer>false</organismsDiffer>
    <experiments>3</experiments>
</comment>
<comment type="subcellular location">
    <subcellularLocation>
        <location evidence="2">Nucleus inner membrane</location>
        <topology evidence="3">Multi-pass membrane protein</topology>
        <orientation evidence="1">Nucleoplasmic side</orientation>
    </subcellularLocation>
    <subcellularLocation>
        <location evidence="2">Nucleus envelope</location>
    </subcellularLocation>
    <text evidence="2">Colocalizes with lamins and RAN-GTP at the nuclear envelope.</text>
</comment>
<comment type="alternative products">
    <event type="alternative splicing"/>
    <isoform>
        <id>O14524-1</id>
        <name>1</name>
        <sequence type="displayed"/>
    </isoform>
    <isoform>
        <id>O14524-2</id>
        <name>2</name>
        <sequence type="described" ref="VSP_011896"/>
    </isoform>
</comment>
<comment type="domain">
    <text evidence="1">The transmembrane domains are required and sufficient for its oligomerization.</text>
</comment>
<comment type="PTM">
    <text evidence="2">Phosphorylation may regulate its interaction with RAN-GTP.</text>
</comment>
<comment type="similarity">
    <text evidence="8">Belongs to the NEMP family.</text>
</comment>
<comment type="sequence caution" evidence="8">
    <conflict type="erroneous initiation">
        <sequence resource="EMBL-CDS" id="AAH71597"/>
    </conflict>
    <text>Extended N-terminus.</text>
</comment>
<comment type="sequence caution" evidence="8">
    <conflict type="erroneous initiation">
        <sequence resource="EMBL-CDS" id="BAA22955"/>
    </conflict>
    <text>Extended N-terminus.</text>
</comment>
<sequence length="444" mass="50640">MAGGMKVAVSPAVGPGPWGSGVGGGGTVRLLLILSGCLVYGTAETDVNVVMLQESQVCEKRASQQFCYTNVLIPKWHDIWTRIQIRVNSSRLVRVTQVENEEKLKELEQFSIWNFFSSFLKEKLNDTYVNVGLYSTKTCLKVEIIEKDTKYSVIVIRRFDPKLFLVFLLGLMLFFCGDLLSRSQIFYYSTGMTVGIVASLLIIIFILSKFMPKKSPIYVILVGGWSFSLYLIQLVFKNLQEIWRCYWQYLLSYVLTVGFMSFAVCYKYGPLENERSINLLTWTLQLMGLCFMYSGIQIPHIALAIIIIALCTKNLEHPIQWLYITCRKVCKGAEKPVPPRLLTEEEYRIQGEVETRKALEELREFCNSPDCSAWKTVSRIQSPKRFADFVEGSSHLTPNEVSVHEQEYGLGSIIAQDEIYEEASSEEEDSYSRCPAITQNNFLT</sequence>
<name>NEMP1_HUMAN</name>
<protein>
    <recommendedName>
        <fullName>Nuclear envelope integral membrane protein 1</fullName>
    </recommendedName>
</protein>
<keyword id="KW-0025">Alternative splicing</keyword>
<keyword id="KW-0265">Erythrocyte maturation</keyword>
<keyword id="KW-0325">Glycoprotein</keyword>
<keyword id="KW-0472">Membrane</keyword>
<keyword id="KW-0539">Nucleus</keyword>
<keyword id="KW-0597">Phosphoprotein</keyword>
<keyword id="KW-1267">Proteomics identification</keyword>
<keyword id="KW-1185">Reference proteome</keyword>
<keyword id="KW-0732">Signal</keyword>
<keyword id="KW-0812">Transmembrane</keyword>
<keyword id="KW-1133">Transmembrane helix</keyword>
<proteinExistence type="evidence at protein level"/>
<organism>
    <name type="scientific">Homo sapiens</name>
    <name type="common">Human</name>
    <dbReference type="NCBI Taxonomy" id="9606"/>
    <lineage>
        <taxon>Eukaryota</taxon>
        <taxon>Metazoa</taxon>
        <taxon>Chordata</taxon>
        <taxon>Craniata</taxon>
        <taxon>Vertebrata</taxon>
        <taxon>Euteleostomi</taxon>
        <taxon>Mammalia</taxon>
        <taxon>Eutheria</taxon>
        <taxon>Euarchontoglires</taxon>
        <taxon>Primates</taxon>
        <taxon>Haplorrhini</taxon>
        <taxon>Catarrhini</taxon>
        <taxon>Hominidae</taxon>
        <taxon>Homo</taxon>
    </lineage>
</organism>
<feature type="signal peptide" evidence="3">
    <location>
        <begin position="1"/>
        <end position="43"/>
    </location>
</feature>
<feature type="chain" id="PRO_0000050744" description="Nuclear envelope integral membrane protein 1">
    <location>
        <begin position="44"/>
        <end position="444"/>
    </location>
</feature>
<feature type="transmembrane region" description="Helical" evidence="3">
    <location>
        <begin position="161"/>
        <end position="181"/>
    </location>
</feature>
<feature type="transmembrane region" description="Helical" evidence="3">
    <location>
        <begin position="186"/>
        <end position="206"/>
    </location>
</feature>
<feature type="transmembrane region" description="Helical" evidence="3">
    <location>
        <begin position="216"/>
        <end position="236"/>
    </location>
</feature>
<feature type="transmembrane region" description="Helical" evidence="3">
    <location>
        <begin position="245"/>
        <end position="265"/>
    </location>
</feature>
<feature type="transmembrane region" description="Helical" evidence="3">
    <location>
        <begin position="289"/>
        <end position="309"/>
    </location>
</feature>
<feature type="region of interest" description="A; required for its colocalization with lamins at the nuclear envelope" evidence="2">
    <location>
        <begin position="186"/>
        <end position="297"/>
    </location>
</feature>
<feature type="region of interest" description="Required for nuclear localization" evidence="2">
    <location>
        <begin position="336"/>
        <end position="444"/>
    </location>
</feature>
<feature type="region of interest" description="B; required for interaction with RAN-GTP" evidence="2">
    <location>
        <begin position="336"/>
        <end position="405"/>
    </location>
</feature>
<feature type="modified residue" description="Phosphoserine" evidence="9 10">
    <location>
        <position position="368"/>
    </location>
</feature>
<feature type="modified residue" description="Phosphoserine" evidence="11">
    <location>
        <position position="424"/>
    </location>
</feature>
<feature type="modified residue" description="Phosphoserine" evidence="11">
    <location>
        <position position="425"/>
    </location>
</feature>
<feature type="glycosylation site" description="N-linked (GlcNAc...) asparagine" evidence="3">
    <location>
        <position position="125"/>
    </location>
</feature>
<feature type="splice variant" id="VSP_011896" description="In isoform 2." evidence="5 6 7">
    <location>
        <begin position="110"/>
        <end position="182"/>
    </location>
</feature>
<feature type="sequence variant" id="VAR_057817" description="In dbSNP:rs17546579.">
    <original>I</original>
    <variation>V</variation>
    <location>
        <position position="217"/>
    </location>
</feature>
<feature type="sequence conflict" description="In Ref. 4; CAH18250." evidence="8" ref="4">
    <original>F</original>
    <variation>L</variation>
    <location>
        <position position="442"/>
    </location>
</feature>